<comment type="subunit">
    <text evidence="1">Homodimer and heterodimers.</text>
</comment>
<comment type="subcellular location">
    <subcellularLocation>
        <location evidence="1">Cell membrane</location>
        <topology evidence="1">Multi-pass membrane protein</topology>
    </subcellularLocation>
</comment>
<comment type="similarity">
    <text evidence="4">Belongs to the Casparian strip membrane proteins (CASP) family.</text>
</comment>
<gene>
    <name type="ordered locus">Sb04g007720</name>
</gene>
<protein>
    <recommendedName>
        <fullName>CASP-like protein 2D1</fullName>
        <shortName>SbCASPL2D1</shortName>
    </recommendedName>
</protein>
<reference key="1">
    <citation type="journal article" date="2009" name="Nature">
        <title>The Sorghum bicolor genome and the diversification of grasses.</title>
        <authorList>
            <person name="Paterson A.H."/>
            <person name="Bowers J.E."/>
            <person name="Bruggmann R."/>
            <person name="Dubchak I."/>
            <person name="Grimwood J."/>
            <person name="Gundlach H."/>
            <person name="Haberer G."/>
            <person name="Hellsten U."/>
            <person name="Mitros T."/>
            <person name="Poliakov A."/>
            <person name="Schmutz J."/>
            <person name="Spannagl M."/>
            <person name="Tang H."/>
            <person name="Wang X."/>
            <person name="Wicker T."/>
            <person name="Bharti A.K."/>
            <person name="Chapman J."/>
            <person name="Feltus F.A."/>
            <person name="Gowik U."/>
            <person name="Grigoriev I.V."/>
            <person name="Lyons E."/>
            <person name="Maher C.A."/>
            <person name="Martis M."/>
            <person name="Narechania A."/>
            <person name="Otillar R.P."/>
            <person name="Penning B.W."/>
            <person name="Salamov A.A."/>
            <person name="Wang Y."/>
            <person name="Zhang L."/>
            <person name="Carpita N.C."/>
            <person name="Freeling M."/>
            <person name="Gingle A.R."/>
            <person name="Hash C.T."/>
            <person name="Keller B."/>
            <person name="Klein P."/>
            <person name="Kresovich S."/>
            <person name="McCann M.C."/>
            <person name="Ming R."/>
            <person name="Peterson D.G."/>
            <person name="Mehboob-ur-Rahman M."/>
            <person name="Ware D."/>
            <person name="Westhoff P."/>
            <person name="Mayer K.F.X."/>
            <person name="Messing J."/>
            <person name="Rokhsar D.S."/>
        </authorList>
    </citation>
    <scope>NUCLEOTIDE SEQUENCE [LARGE SCALE GENOMIC DNA]</scope>
    <source>
        <strain>cv. BTx623</strain>
    </source>
</reference>
<reference key="2">
    <citation type="journal article" date="2018" name="Plant J.">
        <title>The Sorghum bicolor reference genome: improved assembly, gene annotations, a transcriptome atlas, and signatures of genome organization.</title>
        <authorList>
            <person name="McCormick R.F."/>
            <person name="Truong S.K."/>
            <person name="Sreedasyam A."/>
            <person name="Jenkins J."/>
            <person name="Shu S."/>
            <person name="Sims D."/>
            <person name="Kennedy M."/>
            <person name="Amirebrahimi M."/>
            <person name="Weers B.D."/>
            <person name="McKinley B."/>
            <person name="Mattison A."/>
            <person name="Morishige D.T."/>
            <person name="Grimwood J."/>
            <person name="Schmutz J."/>
            <person name="Mullet J.E."/>
        </authorList>
    </citation>
    <scope>GENOME REANNOTATION</scope>
    <source>
        <strain>cv. BTx623</strain>
    </source>
</reference>
<reference key="3">
    <citation type="journal article" date="2014" name="Plant Physiol.">
        <title>Functional and evolutionary analysis of the CASPARIAN STRIP MEMBRANE DOMAIN PROTEIN family.</title>
        <authorList>
            <person name="Roppolo D."/>
            <person name="Boeckmann B."/>
            <person name="Pfister A."/>
            <person name="Boutet E."/>
            <person name="Rubio M.C."/>
            <person name="Denervaud-Tendon V."/>
            <person name="Vermeer J.E."/>
            <person name="Gheyselinck J."/>
            <person name="Xenarios I."/>
            <person name="Geldner N."/>
        </authorList>
    </citation>
    <scope>GENE FAMILY</scope>
    <scope>NOMENCLATURE</scope>
</reference>
<feature type="chain" id="PRO_0000391532" description="CASP-like protein 2D1">
    <location>
        <begin position="1"/>
        <end position="180"/>
    </location>
</feature>
<feature type="topological domain" description="Cytoplasmic" evidence="2">
    <location>
        <begin position="1"/>
        <end position="7"/>
    </location>
</feature>
<feature type="transmembrane region" description="Helical" evidence="2">
    <location>
        <begin position="8"/>
        <end position="28"/>
    </location>
</feature>
<feature type="topological domain" description="Extracellular" evidence="2">
    <location>
        <begin position="29"/>
        <end position="48"/>
    </location>
</feature>
<feature type="transmembrane region" description="Helical" evidence="2">
    <location>
        <begin position="49"/>
        <end position="69"/>
    </location>
</feature>
<feature type="topological domain" description="Cytoplasmic" evidence="2">
    <location>
        <begin position="70"/>
        <end position="79"/>
    </location>
</feature>
<feature type="transmembrane region" description="Helical" evidence="2">
    <location>
        <begin position="80"/>
        <end position="100"/>
    </location>
</feature>
<feature type="topological domain" description="Extracellular" evidence="2">
    <location>
        <begin position="101"/>
        <end position="129"/>
    </location>
</feature>
<feature type="transmembrane region" description="Helical" evidence="2">
    <location>
        <begin position="130"/>
        <end position="150"/>
    </location>
</feature>
<feature type="topological domain" description="Cytoplasmic" evidence="2">
    <location>
        <begin position="151"/>
        <end position="180"/>
    </location>
</feature>
<feature type="region of interest" description="Disordered" evidence="3">
    <location>
        <begin position="161"/>
        <end position="180"/>
    </location>
</feature>
<feature type="compositionally biased region" description="Basic and acidic residues" evidence="3">
    <location>
        <begin position="170"/>
        <end position="180"/>
    </location>
</feature>
<keyword id="KW-1003">Cell membrane</keyword>
<keyword id="KW-0472">Membrane</keyword>
<keyword id="KW-1185">Reference proteome</keyword>
<keyword id="KW-0812">Transmembrane</keyword>
<keyword id="KW-1133">Transmembrane helix</keyword>
<dbReference type="EMBL" id="CM000763">
    <property type="protein sequence ID" value="EES06519.1"/>
    <property type="molecule type" value="Genomic_DNA"/>
</dbReference>
<dbReference type="RefSeq" id="XP_002453543.1">
    <property type="nucleotide sequence ID" value="XM_002453498.1"/>
</dbReference>
<dbReference type="FunCoup" id="C5XY39">
    <property type="interactions" value="1558"/>
</dbReference>
<dbReference type="STRING" id="4558.C5XY39"/>
<dbReference type="EnsemblPlants" id="EES06519">
    <property type="protein sequence ID" value="EES06519"/>
    <property type="gene ID" value="SORBI_3004G093800"/>
</dbReference>
<dbReference type="Gramene" id="EES06519">
    <property type="protein sequence ID" value="EES06519"/>
    <property type="gene ID" value="SORBI_3004G093800"/>
</dbReference>
<dbReference type="KEGG" id="sbi:8073763"/>
<dbReference type="eggNOG" id="ENOG502RY7Y">
    <property type="taxonomic scope" value="Eukaryota"/>
</dbReference>
<dbReference type="HOGENOM" id="CLU_066104_2_1_1"/>
<dbReference type="InParanoid" id="C5XY39"/>
<dbReference type="OMA" id="KPLARYD"/>
<dbReference type="OrthoDB" id="755577at2759"/>
<dbReference type="Proteomes" id="UP000000768">
    <property type="component" value="Chromosome 4"/>
</dbReference>
<dbReference type="GO" id="GO:0005886">
    <property type="term" value="C:plasma membrane"/>
    <property type="evidence" value="ECO:0007669"/>
    <property type="project" value="UniProtKB-SubCell"/>
</dbReference>
<dbReference type="InterPro" id="IPR006459">
    <property type="entry name" value="CASP/CASPL"/>
</dbReference>
<dbReference type="InterPro" id="IPR006702">
    <property type="entry name" value="CASP_dom"/>
</dbReference>
<dbReference type="NCBIfam" id="TIGR01569">
    <property type="entry name" value="A_tha_TIGR01569"/>
    <property type="match status" value="1"/>
</dbReference>
<dbReference type="PANTHER" id="PTHR33573:SF30">
    <property type="entry name" value="CASP-LIKE PROTEIN 2C1-RELATED"/>
    <property type="match status" value="1"/>
</dbReference>
<dbReference type="PANTHER" id="PTHR33573">
    <property type="entry name" value="CASP-LIKE PROTEIN 4A4"/>
    <property type="match status" value="1"/>
</dbReference>
<dbReference type="Pfam" id="PF04535">
    <property type="entry name" value="CASP_dom"/>
    <property type="match status" value="1"/>
</dbReference>
<evidence type="ECO:0000250" key="1"/>
<evidence type="ECO:0000255" key="2"/>
<evidence type="ECO:0000256" key="3">
    <source>
        <dbReference type="SAM" id="MobiDB-lite"/>
    </source>
</evidence>
<evidence type="ECO:0000305" key="4"/>
<accession>C5XY39</accession>
<organism>
    <name type="scientific">Sorghum bicolor</name>
    <name type="common">Sorghum</name>
    <name type="synonym">Sorghum vulgare</name>
    <dbReference type="NCBI Taxonomy" id="4558"/>
    <lineage>
        <taxon>Eukaryota</taxon>
        <taxon>Viridiplantae</taxon>
        <taxon>Streptophyta</taxon>
        <taxon>Embryophyta</taxon>
        <taxon>Tracheophyta</taxon>
        <taxon>Spermatophyta</taxon>
        <taxon>Magnoliopsida</taxon>
        <taxon>Liliopsida</taxon>
        <taxon>Poales</taxon>
        <taxon>Poaceae</taxon>
        <taxon>PACMAD clade</taxon>
        <taxon>Panicoideae</taxon>
        <taxon>Andropogonodae</taxon>
        <taxon>Andropogoneae</taxon>
        <taxon>Sorghinae</taxon>
        <taxon>Sorghum</taxon>
    </lineage>
</organism>
<proteinExistence type="evidence at transcript level"/>
<sequence length="180" mass="19177">MAASGLKVPEMALRVCVVPLALASLWEMATNAQADDTYGEVKFSDLSGFSYLVGVNAVTAAYALVSILLSSLKPLARYDWVILVMDQASAYLLVTSASAAAELLQLARRGDREVSWGEVCSYFGRFCGKATVSLALHAAALACFVALALVSAFRVLSTTGSSCHPPKHAQAQEHEQGRYN</sequence>
<name>CSPLA_SORBI</name>